<protein>
    <recommendedName>
        <fullName>Beta-crystallin B2</fullName>
    </recommendedName>
    <alternativeName>
        <fullName>Beta-B2 crystallin</fullName>
    </alternativeName>
    <alternativeName>
        <fullName>Beta-crystallin Bp</fullName>
    </alternativeName>
</protein>
<evidence type="ECO:0000250" key="1"/>
<evidence type="ECO:0000250" key="2">
    <source>
        <dbReference type="UniProtKB" id="P02522"/>
    </source>
</evidence>
<evidence type="ECO:0000255" key="3">
    <source>
        <dbReference type="PROSITE-ProRule" id="PRU00028"/>
    </source>
</evidence>
<evidence type="ECO:0000305" key="4"/>
<sequence length="205" mass="23381">MASDHQTQAGKPQPLNPKIIIFEQENFQGHSHELSGPCPNLKETGMEKAGSVLVQAGPWVGYEQANCKGEQFVFEKGEYPRWDSWTSSRRTDSLSSLRPIKVDSQEHKIILYENPNFTGKKMEIVDDDVPSFHAHGYQEKVSSVRVQSGTWVGYQYPGYRGLQYLLEKGDYKDNSDFGAPHPQVQSVRRIRDMQWHQRGAFHPSS</sequence>
<dbReference type="EMBL" id="M60559">
    <property type="protein sequence ID" value="AAA21181.1"/>
    <property type="molecule type" value="mRNA"/>
</dbReference>
<dbReference type="EMBL" id="AK020891">
    <property type="protein sequence ID" value="BAB32243.1"/>
    <property type="molecule type" value="mRNA"/>
</dbReference>
<dbReference type="EMBL" id="BC085185">
    <property type="protein sequence ID" value="AAH85185.1"/>
    <property type="molecule type" value="mRNA"/>
</dbReference>
<dbReference type="CCDS" id="CCDS19546.1"/>
<dbReference type="PIR" id="A39757">
    <property type="entry name" value="A39757"/>
</dbReference>
<dbReference type="RefSeq" id="NP_031799.1">
    <property type="nucleotide sequence ID" value="NM_007773.4"/>
</dbReference>
<dbReference type="RefSeq" id="XP_006534822.1">
    <property type="nucleotide sequence ID" value="XM_006534759.1"/>
</dbReference>
<dbReference type="RefSeq" id="XP_006534823.1">
    <property type="nucleotide sequence ID" value="XM_006534760.1"/>
</dbReference>
<dbReference type="RefSeq" id="XP_017176141.1">
    <property type="nucleotide sequence ID" value="XM_017320652.1"/>
</dbReference>
<dbReference type="PDB" id="1E7N">
    <property type="method" value="X-ray"/>
    <property type="resolution" value="2.35 A"/>
    <property type="chains" value="A/B=2-104"/>
</dbReference>
<dbReference type="PDBsum" id="1E7N"/>
<dbReference type="SMR" id="P62696"/>
<dbReference type="BioGRID" id="198914">
    <property type="interactions" value="2"/>
</dbReference>
<dbReference type="FunCoup" id="P62696">
    <property type="interactions" value="8"/>
</dbReference>
<dbReference type="STRING" id="10090.ENSMUSP00000107955"/>
<dbReference type="GlyGen" id="P62696">
    <property type="glycosylation" value="1 site, 1 N-linked glycan (1 site)"/>
</dbReference>
<dbReference type="iPTMnet" id="P62696"/>
<dbReference type="PhosphoSitePlus" id="P62696"/>
<dbReference type="PaxDb" id="10090-ENSMUSP00000107955"/>
<dbReference type="ProteomicsDB" id="284117"/>
<dbReference type="Antibodypedia" id="35320">
    <property type="antibodies" value="127 antibodies from 24 providers"/>
</dbReference>
<dbReference type="DNASU" id="12961"/>
<dbReference type="Ensembl" id="ENSMUST00000031295.8">
    <property type="protein sequence ID" value="ENSMUSP00000031295.8"/>
    <property type="gene ID" value="ENSMUSG00000042240.15"/>
</dbReference>
<dbReference type="Ensembl" id="ENSMUST00000112336.8">
    <property type="protein sequence ID" value="ENSMUSP00000107955.2"/>
    <property type="gene ID" value="ENSMUSG00000042240.15"/>
</dbReference>
<dbReference type="GeneID" id="12961"/>
<dbReference type="KEGG" id="mmu:12961"/>
<dbReference type="UCSC" id="uc008ytx.2">
    <property type="organism name" value="mouse"/>
</dbReference>
<dbReference type="AGR" id="MGI:88519"/>
<dbReference type="CTD" id="1415"/>
<dbReference type="MGI" id="MGI:88519">
    <property type="gene designation" value="Crybb2"/>
</dbReference>
<dbReference type="VEuPathDB" id="HostDB:ENSMUSG00000042240"/>
<dbReference type="eggNOG" id="ENOG502QVM6">
    <property type="taxonomic scope" value="Eukaryota"/>
</dbReference>
<dbReference type="GeneTree" id="ENSGT00940000160048"/>
<dbReference type="HOGENOM" id="CLU_081883_0_1_1"/>
<dbReference type="InParanoid" id="P62696"/>
<dbReference type="OMA" id="FRPIKQD"/>
<dbReference type="OrthoDB" id="8525367at2759"/>
<dbReference type="PhylomeDB" id="P62696"/>
<dbReference type="TreeFam" id="TF331401"/>
<dbReference type="BioGRID-ORCS" id="12961">
    <property type="hits" value="1 hit in 61 CRISPR screens"/>
</dbReference>
<dbReference type="EvolutionaryTrace" id="P62696"/>
<dbReference type="PRO" id="PR:P62696"/>
<dbReference type="Proteomes" id="UP000000589">
    <property type="component" value="Chromosome 5"/>
</dbReference>
<dbReference type="RNAct" id="P62696">
    <property type="molecule type" value="protein"/>
</dbReference>
<dbReference type="Bgee" id="ENSMUSG00000042240">
    <property type="expression patterns" value="Expressed in epithelium of lens and 19 other cell types or tissues"/>
</dbReference>
<dbReference type="GO" id="GO:0042802">
    <property type="term" value="F:identical protein binding"/>
    <property type="evidence" value="ECO:0000353"/>
    <property type="project" value="MGI"/>
</dbReference>
<dbReference type="GO" id="GO:0005212">
    <property type="term" value="F:structural constituent of eye lens"/>
    <property type="evidence" value="ECO:0000314"/>
    <property type="project" value="MGI"/>
</dbReference>
<dbReference type="GO" id="GO:0043010">
    <property type="term" value="P:camera-type eye development"/>
    <property type="evidence" value="ECO:0000315"/>
    <property type="project" value="MGI"/>
</dbReference>
<dbReference type="GO" id="GO:0007601">
    <property type="term" value="P:visual perception"/>
    <property type="evidence" value="ECO:0000315"/>
    <property type="project" value="MGI"/>
</dbReference>
<dbReference type="FunFam" id="2.60.20.10:FF:000005">
    <property type="entry name" value="Crystallin, beta B1"/>
    <property type="match status" value="1"/>
</dbReference>
<dbReference type="FunFam" id="2.60.20.10:FF:000002">
    <property type="entry name" value="Crystallin, beta B2"/>
    <property type="match status" value="1"/>
</dbReference>
<dbReference type="Gene3D" id="2.60.20.10">
    <property type="entry name" value="Crystallins"/>
    <property type="match status" value="2"/>
</dbReference>
<dbReference type="InterPro" id="IPR050252">
    <property type="entry name" value="Beta/Gamma-Crystallin"/>
</dbReference>
<dbReference type="InterPro" id="IPR001064">
    <property type="entry name" value="Beta/gamma_crystallin"/>
</dbReference>
<dbReference type="InterPro" id="IPR011024">
    <property type="entry name" value="G_crystallin-like"/>
</dbReference>
<dbReference type="PANTHER" id="PTHR11818:SF11">
    <property type="entry name" value="BETA-CRYSTALLIN B2"/>
    <property type="match status" value="1"/>
</dbReference>
<dbReference type="PANTHER" id="PTHR11818">
    <property type="entry name" value="BETA/GAMMA CRYSTALLIN"/>
    <property type="match status" value="1"/>
</dbReference>
<dbReference type="Pfam" id="PF00030">
    <property type="entry name" value="Crystall"/>
    <property type="match status" value="2"/>
</dbReference>
<dbReference type="PRINTS" id="PR01367">
    <property type="entry name" value="BGCRYSTALLIN"/>
</dbReference>
<dbReference type="SMART" id="SM00247">
    <property type="entry name" value="XTALbg"/>
    <property type="match status" value="2"/>
</dbReference>
<dbReference type="SUPFAM" id="SSF49695">
    <property type="entry name" value="gamma-Crystallin-like"/>
    <property type="match status" value="1"/>
</dbReference>
<dbReference type="PROSITE" id="PS50915">
    <property type="entry name" value="CRYSTALLIN_BETA_GAMMA"/>
    <property type="match status" value="4"/>
</dbReference>
<accession>P62696</accession>
<accession>P19942</accession>
<accession>P26775</accession>
<accession>Q0VGT6</accession>
<proteinExistence type="evidence at protein level"/>
<organism>
    <name type="scientific">Mus musculus</name>
    <name type="common">Mouse</name>
    <dbReference type="NCBI Taxonomy" id="10090"/>
    <lineage>
        <taxon>Eukaryota</taxon>
        <taxon>Metazoa</taxon>
        <taxon>Chordata</taxon>
        <taxon>Craniata</taxon>
        <taxon>Vertebrata</taxon>
        <taxon>Euteleostomi</taxon>
        <taxon>Mammalia</taxon>
        <taxon>Eutheria</taxon>
        <taxon>Euarchontoglires</taxon>
        <taxon>Glires</taxon>
        <taxon>Rodentia</taxon>
        <taxon>Myomorpha</taxon>
        <taxon>Muroidea</taxon>
        <taxon>Muridae</taxon>
        <taxon>Murinae</taxon>
        <taxon>Mus</taxon>
        <taxon>Mus</taxon>
    </lineage>
</organism>
<comment type="function">
    <text>Crystallins are the dominant structural components of the vertebrate eye lens.</text>
</comment>
<comment type="subunit">
    <text evidence="1">Homo/heterodimer, or complexes of higher-order. The structure of beta-crystallin oligomers seems to be stabilized through interactions between the N-terminal arms (By similarity).</text>
</comment>
<comment type="domain">
    <text>Has a two-domain beta-structure, folded into four very similar Greek key motifs.</text>
</comment>
<comment type="similarity">
    <text evidence="4">Belongs to the beta/gamma-crystallin family.</text>
</comment>
<keyword id="KW-0002">3D-structure</keyword>
<keyword id="KW-0007">Acetylation</keyword>
<keyword id="KW-0273">Eye lens protein</keyword>
<keyword id="KW-1185">Reference proteome</keyword>
<keyword id="KW-0677">Repeat</keyword>
<name>CRBB2_MOUSE</name>
<reference key="1">
    <citation type="journal article" date="1991" name="J. Biol. Chem.">
        <title>Deletion mutation in an eye lens beta-crystallin. An animal model for inherited cataracts.</title>
        <authorList>
            <person name="Chambers C."/>
            <person name="Russell P."/>
        </authorList>
    </citation>
    <scope>NUCLEOTIDE SEQUENCE [MRNA]</scope>
    <source>
        <strain>Swiss Webster</strain>
        <tissue>Lens</tissue>
    </source>
</reference>
<reference key="2">
    <citation type="journal article" date="2005" name="Science">
        <title>The transcriptional landscape of the mammalian genome.</title>
        <authorList>
            <person name="Carninci P."/>
            <person name="Kasukawa T."/>
            <person name="Katayama S."/>
            <person name="Gough J."/>
            <person name="Frith M.C."/>
            <person name="Maeda N."/>
            <person name="Oyama R."/>
            <person name="Ravasi T."/>
            <person name="Lenhard B."/>
            <person name="Wells C."/>
            <person name="Kodzius R."/>
            <person name="Shimokawa K."/>
            <person name="Bajic V.B."/>
            <person name="Brenner S.E."/>
            <person name="Batalov S."/>
            <person name="Forrest A.R."/>
            <person name="Zavolan M."/>
            <person name="Davis M.J."/>
            <person name="Wilming L.G."/>
            <person name="Aidinis V."/>
            <person name="Allen J.E."/>
            <person name="Ambesi-Impiombato A."/>
            <person name="Apweiler R."/>
            <person name="Aturaliya R.N."/>
            <person name="Bailey T.L."/>
            <person name="Bansal M."/>
            <person name="Baxter L."/>
            <person name="Beisel K.W."/>
            <person name="Bersano T."/>
            <person name="Bono H."/>
            <person name="Chalk A.M."/>
            <person name="Chiu K.P."/>
            <person name="Choudhary V."/>
            <person name="Christoffels A."/>
            <person name="Clutterbuck D.R."/>
            <person name="Crowe M.L."/>
            <person name="Dalla E."/>
            <person name="Dalrymple B.P."/>
            <person name="de Bono B."/>
            <person name="Della Gatta G."/>
            <person name="di Bernardo D."/>
            <person name="Down T."/>
            <person name="Engstrom P."/>
            <person name="Fagiolini M."/>
            <person name="Faulkner G."/>
            <person name="Fletcher C.F."/>
            <person name="Fukushima T."/>
            <person name="Furuno M."/>
            <person name="Futaki S."/>
            <person name="Gariboldi M."/>
            <person name="Georgii-Hemming P."/>
            <person name="Gingeras T.R."/>
            <person name="Gojobori T."/>
            <person name="Green R.E."/>
            <person name="Gustincich S."/>
            <person name="Harbers M."/>
            <person name="Hayashi Y."/>
            <person name="Hensch T.K."/>
            <person name="Hirokawa N."/>
            <person name="Hill D."/>
            <person name="Huminiecki L."/>
            <person name="Iacono M."/>
            <person name="Ikeo K."/>
            <person name="Iwama A."/>
            <person name="Ishikawa T."/>
            <person name="Jakt M."/>
            <person name="Kanapin A."/>
            <person name="Katoh M."/>
            <person name="Kawasawa Y."/>
            <person name="Kelso J."/>
            <person name="Kitamura H."/>
            <person name="Kitano H."/>
            <person name="Kollias G."/>
            <person name="Krishnan S.P."/>
            <person name="Kruger A."/>
            <person name="Kummerfeld S.K."/>
            <person name="Kurochkin I.V."/>
            <person name="Lareau L.F."/>
            <person name="Lazarevic D."/>
            <person name="Lipovich L."/>
            <person name="Liu J."/>
            <person name="Liuni S."/>
            <person name="McWilliam S."/>
            <person name="Madan Babu M."/>
            <person name="Madera M."/>
            <person name="Marchionni L."/>
            <person name="Matsuda H."/>
            <person name="Matsuzawa S."/>
            <person name="Miki H."/>
            <person name="Mignone F."/>
            <person name="Miyake S."/>
            <person name="Morris K."/>
            <person name="Mottagui-Tabar S."/>
            <person name="Mulder N."/>
            <person name="Nakano N."/>
            <person name="Nakauchi H."/>
            <person name="Ng P."/>
            <person name="Nilsson R."/>
            <person name="Nishiguchi S."/>
            <person name="Nishikawa S."/>
            <person name="Nori F."/>
            <person name="Ohara O."/>
            <person name="Okazaki Y."/>
            <person name="Orlando V."/>
            <person name="Pang K.C."/>
            <person name="Pavan W.J."/>
            <person name="Pavesi G."/>
            <person name="Pesole G."/>
            <person name="Petrovsky N."/>
            <person name="Piazza S."/>
            <person name="Reed J."/>
            <person name="Reid J.F."/>
            <person name="Ring B.Z."/>
            <person name="Ringwald M."/>
            <person name="Rost B."/>
            <person name="Ruan Y."/>
            <person name="Salzberg S.L."/>
            <person name="Sandelin A."/>
            <person name="Schneider C."/>
            <person name="Schoenbach C."/>
            <person name="Sekiguchi K."/>
            <person name="Semple C.A."/>
            <person name="Seno S."/>
            <person name="Sessa L."/>
            <person name="Sheng Y."/>
            <person name="Shibata Y."/>
            <person name="Shimada H."/>
            <person name="Shimada K."/>
            <person name="Silva D."/>
            <person name="Sinclair B."/>
            <person name="Sperling S."/>
            <person name="Stupka E."/>
            <person name="Sugiura K."/>
            <person name="Sultana R."/>
            <person name="Takenaka Y."/>
            <person name="Taki K."/>
            <person name="Tammoja K."/>
            <person name="Tan S.L."/>
            <person name="Tang S."/>
            <person name="Taylor M.S."/>
            <person name="Tegner J."/>
            <person name="Teichmann S.A."/>
            <person name="Ueda H.R."/>
            <person name="van Nimwegen E."/>
            <person name="Verardo R."/>
            <person name="Wei C.L."/>
            <person name="Yagi K."/>
            <person name="Yamanishi H."/>
            <person name="Zabarovsky E."/>
            <person name="Zhu S."/>
            <person name="Zimmer A."/>
            <person name="Hide W."/>
            <person name="Bult C."/>
            <person name="Grimmond S.M."/>
            <person name="Teasdale R.D."/>
            <person name="Liu E.T."/>
            <person name="Brusic V."/>
            <person name="Quackenbush J."/>
            <person name="Wahlestedt C."/>
            <person name="Mattick J.S."/>
            <person name="Hume D.A."/>
            <person name="Kai C."/>
            <person name="Sasaki D."/>
            <person name="Tomaru Y."/>
            <person name="Fukuda S."/>
            <person name="Kanamori-Katayama M."/>
            <person name="Suzuki M."/>
            <person name="Aoki J."/>
            <person name="Arakawa T."/>
            <person name="Iida J."/>
            <person name="Imamura K."/>
            <person name="Itoh M."/>
            <person name="Kato T."/>
            <person name="Kawaji H."/>
            <person name="Kawagashira N."/>
            <person name="Kawashima T."/>
            <person name="Kojima M."/>
            <person name="Kondo S."/>
            <person name="Konno H."/>
            <person name="Nakano K."/>
            <person name="Ninomiya N."/>
            <person name="Nishio T."/>
            <person name="Okada M."/>
            <person name="Plessy C."/>
            <person name="Shibata K."/>
            <person name="Shiraki T."/>
            <person name="Suzuki S."/>
            <person name="Tagami M."/>
            <person name="Waki K."/>
            <person name="Watahiki A."/>
            <person name="Okamura-Oho Y."/>
            <person name="Suzuki H."/>
            <person name="Kawai J."/>
            <person name="Hayashizaki Y."/>
        </authorList>
    </citation>
    <scope>NUCLEOTIDE SEQUENCE [LARGE SCALE MRNA]</scope>
    <source>
        <strain>C57BL/6J</strain>
        <tissue>Retina</tissue>
    </source>
</reference>
<reference key="3">
    <citation type="journal article" date="2004" name="Genome Res.">
        <title>The status, quality, and expansion of the NIH full-length cDNA project: the Mammalian Gene Collection (MGC).</title>
        <authorList>
            <consortium name="The MGC Project Team"/>
        </authorList>
    </citation>
    <scope>NUCLEOTIDE SEQUENCE [LARGE SCALE MRNA]</scope>
    <source>
        <strain>C57BL/6J</strain>
        <tissue>Eye</tissue>
    </source>
</reference>
<gene>
    <name type="primary">Crybb2</name>
</gene>
<feature type="initiator methionine" description="Removed" evidence="2">
    <location>
        <position position="1"/>
    </location>
</feature>
<feature type="chain" id="PRO_0000057555" description="Beta-crystallin B2">
    <location>
        <begin position="2"/>
        <end position="205"/>
    </location>
</feature>
<feature type="domain" description="Beta/gamma crystallin 'Greek key' 1" evidence="3">
    <location>
        <begin position="17"/>
        <end position="56"/>
    </location>
</feature>
<feature type="domain" description="Beta/gamma crystallin 'Greek key' 2" evidence="3">
    <location>
        <begin position="57"/>
        <end position="101"/>
    </location>
</feature>
<feature type="domain" description="Beta/gamma crystallin 'Greek key' 3" evidence="3">
    <location>
        <begin position="107"/>
        <end position="148"/>
    </location>
</feature>
<feature type="domain" description="Beta/gamma crystallin 'Greek key' 4" evidence="3">
    <location>
        <begin position="149"/>
        <end position="191"/>
    </location>
</feature>
<feature type="region of interest" description="N-terminal arm">
    <location>
        <begin position="2"/>
        <end position="16"/>
    </location>
</feature>
<feature type="region of interest" description="Connecting peptide">
    <location>
        <begin position="102"/>
        <end position="106"/>
    </location>
</feature>
<feature type="region of interest" description="C-terminal arm">
    <location>
        <begin position="193"/>
        <end position="205"/>
    </location>
</feature>
<feature type="modified residue" description="N-acetylalanine" evidence="2">
    <location>
        <position position="2"/>
    </location>
</feature>